<reference key="1">
    <citation type="submission" date="2006-02" db="EMBL/GenBank/DDBJ databases">
        <title>Complete sequence of chromosome of Rhodoferax ferrireducens DSM 15236.</title>
        <authorList>
            <person name="Copeland A."/>
            <person name="Lucas S."/>
            <person name="Lapidus A."/>
            <person name="Barry K."/>
            <person name="Detter J.C."/>
            <person name="Glavina del Rio T."/>
            <person name="Hammon N."/>
            <person name="Israni S."/>
            <person name="Pitluck S."/>
            <person name="Brettin T."/>
            <person name="Bruce D."/>
            <person name="Han C."/>
            <person name="Tapia R."/>
            <person name="Gilna P."/>
            <person name="Kiss H."/>
            <person name="Schmutz J."/>
            <person name="Larimer F."/>
            <person name="Land M."/>
            <person name="Kyrpides N."/>
            <person name="Ivanova N."/>
            <person name="Richardson P."/>
        </authorList>
    </citation>
    <scope>NUCLEOTIDE SEQUENCE [LARGE SCALE GENOMIC DNA]</scope>
    <source>
        <strain>ATCC BAA-621 / DSM 15236 / T118</strain>
    </source>
</reference>
<evidence type="ECO:0000255" key="1">
    <source>
        <dbReference type="HAMAP-Rule" id="MF_00318"/>
    </source>
</evidence>
<proteinExistence type="inferred from homology"/>
<sequence>MSAIVDIVGREILDSRGNPTVECDVLLESGTMGRAAVPSGASTGSREAIELRDGDKTRYLGKGVLKAVEHINTEISEAVLGLDASEQAFLDKTLIDLDGTDNKSRLGANAMLAVSMAVARAAAEESGLPLYRYFGGMGAVQMPVPMMNVVNGGAHANNSLDIQEFMIIPLGAPSFREALRYGAEVFHALKKIIHDKGMSTAVGDEGGFTPSVASHEEAIQLILQAIDSAGYTAGEQIAIGLDCAASEFYKDGKYQLGAEGLSLNAQEWTDMLATWVDKYPIISIEDGMAENDWDGWKILTDRLGQQVQIVGDDLFVTNTKIFKEGIDKGIANSILIKINQIGTLTETFACIEMAKRAGYTAVISHRSGETEDSTIADIAVGTNAGQIKTGSLSRSDRMAKYNQLLRIEEDLGEIAFYPGRAAFYNLR</sequence>
<gene>
    <name evidence="1" type="primary">eno</name>
    <name type="ordered locus">Rfer_2650</name>
</gene>
<accession>Q21V37</accession>
<name>ENO_ALBFT</name>
<organism>
    <name type="scientific">Albidiferax ferrireducens (strain ATCC BAA-621 / DSM 15236 / T118)</name>
    <name type="common">Rhodoferax ferrireducens</name>
    <dbReference type="NCBI Taxonomy" id="338969"/>
    <lineage>
        <taxon>Bacteria</taxon>
        <taxon>Pseudomonadati</taxon>
        <taxon>Pseudomonadota</taxon>
        <taxon>Betaproteobacteria</taxon>
        <taxon>Burkholderiales</taxon>
        <taxon>Comamonadaceae</taxon>
        <taxon>Rhodoferax</taxon>
    </lineage>
</organism>
<keyword id="KW-0963">Cytoplasm</keyword>
<keyword id="KW-0324">Glycolysis</keyword>
<keyword id="KW-0456">Lyase</keyword>
<keyword id="KW-0460">Magnesium</keyword>
<keyword id="KW-0479">Metal-binding</keyword>
<keyword id="KW-1185">Reference proteome</keyword>
<keyword id="KW-0964">Secreted</keyword>
<feature type="chain" id="PRO_0000267090" description="Enolase">
    <location>
        <begin position="1"/>
        <end position="427"/>
    </location>
</feature>
<feature type="active site" description="Proton donor" evidence="1">
    <location>
        <position position="205"/>
    </location>
</feature>
<feature type="active site" description="Proton acceptor" evidence="1">
    <location>
        <position position="337"/>
    </location>
</feature>
<feature type="binding site" evidence="1">
    <location>
        <position position="163"/>
    </location>
    <ligand>
        <name>(2R)-2-phosphoglycerate</name>
        <dbReference type="ChEBI" id="CHEBI:58289"/>
    </ligand>
</feature>
<feature type="binding site" evidence="1">
    <location>
        <position position="242"/>
    </location>
    <ligand>
        <name>Mg(2+)</name>
        <dbReference type="ChEBI" id="CHEBI:18420"/>
    </ligand>
</feature>
<feature type="binding site" evidence="1">
    <location>
        <position position="285"/>
    </location>
    <ligand>
        <name>Mg(2+)</name>
        <dbReference type="ChEBI" id="CHEBI:18420"/>
    </ligand>
</feature>
<feature type="binding site" evidence="1">
    <location>
        <position position="312"/>
    </location>
    <ligand>
        <name>Mg(2+)</name>
        <dbReference type="ChEBI" id="CHEBI:18420"/>
    </ligand>
</feature>
<feature type="binding site" evidence="1">
    <location>
        <position position="337"/>
    </location>
    <ligand>
        <name>(2R)-2-phosphoglycerate</name>
        <dbReference type="ChEBI" id="CHEBI:58289"/>
    </ligand>
</feature>
<feature type="binding site" evidence="1">
    <location>
        <position position="366"/>
    </location>
    <ligand>
        <name>(2R)-2-phosphoglycerate</name>
        <dbReference type="ChEBI" id="CHEBI:58289"/>
    </ligand>
</feature>
<feature type="binding site" evidence="1">
    <location>
        <position position="367"/>
    </location>
    <ligand>
        <name>(2R)-2-phosphoglycerate</name>
        <dbReference type="ChEBI" id="CHEBI:58289"/>
    </ligand>
</feature>
<feature type="binding site" evidence="1">
    <location>
        <position position="388"/>
    </location>
    <ligand>
        <name>(2R)-2-phosphoglycerate</name>
        <dbReference type="ChEBI" id="CHEBI:58289"/>
    </ligand>
</feature>
<dbReference type="EC" id="4.2.1.11" evidence="1"/>
<dbReference type="EMBL" id="CP000267">
    <property type="protein sequence ID" value="ABD70366.1"/>
    <property type="molecule type" value="Genomic_DNA"/>
</dbReference>
<dbReference type="RefSeq" id="WP_011464934.1">
    <property type="nucleotide sequence ID" value="NC_007908.1"/>
</dbReference>
<dbReference type="SMR" id="Q21V37"/>
<dbReference type="STRING" id="338969.Rfer_2650"/>
<dbReference type="KEGG" id="rfr:Rfer_2650"/>
<dbReference type="eggNOG" id="COG0148">
    <property type="taxonomic scope" value="Bacteria"/>
</dbReference>
<dbReference type="HOGENOM" id="CLU_031223_2_1_4"/>
<dbReference type="OrthoDB" id="9804716at2"/>
<dbReference type="UniPathway" id="UPA00109">
    <property type="reaction ID" value="UER00187"/>
</dbReference>
<dbReference type="Proteomes" id="UP000008332">
    <property type="component" value="Chromosome"/>
</dbReference>
<dbReference type="GO" id="GO:0009986">
    <property type="term" value="C:cell surface"/>
    <property type="evidence" value="ECO:0007669"/>
    <property type="project" value="UniProtKB-SubCell"/>
</dbReference>
<dbReference type="GO" id="GO:0005576">
    <property type="term" value="C:extracellular region"/>
    <property type="evidence" value="ECO:0007669"/>
    <property type="project" value="UniProtKB-SubCell"/>
</dbReference>
<dbReference type="GO" id="GO:0000015">
    <property type="term" value="C:phosphopyruvate hydratase complex"/>
    <property type="evidence" value="ECO:0007669"/>
    <property type="project" value="InterPro"/>
</dbReference>
<dbReference type="GO" id="GO:0000287">
    <property type="term" value="F:magnesium ion binding"/>
    <property type="evidence" value="ECO:0007669"/>
    <property type="project" value="UniProtKB-UniRule"/>
</dbReference>
<dbReference type="GO" id="GO:0004634">
    <property type="term" value="F:phosphopyruvate hydratase activity"/>
    <property type="evidence" value="ECO:0007669"/>
    <property type="project" value="UniProtKB-UniRule"/>
</dbReference>
<dbReference type="GO" id="GO:0006096">
    <property type="term" value="P:glycolytic process"/>
    <property type="evidence" value="ECO:0007669"/>
    <property type="project" value="UniProtKB-UniRule"/>
</dbReference>
<dbReference type="CDD" id="cd03313">
    <property type="entry name" value="enolase"/>
    <property type="match status" value="1"/>
</dbReference>
<dbReference type="FunFam" id="3.20.20.120:FF:000001">
    <property type="entry name" value="Enolase"/>
    <property type="match status" value="1"/>
</dbReference>
<dbReference type="FunFam" id="3.30.390.10:FF:000001">
    <property type="entry name" value="Enolase"/>
    <property type="match status" value="1"/>
</dbReference>
<dbReference type="Gene3D" id="3.20.20.120">
    <property type="entry name" value="Enolase-like C-terminal domain"/>
    <property type="match status" value="1"/>
</dbReference>
<dbReference type="Gene3D" id="3.30.390.10">
    <property type="entry name" value="Enolase-like, N-terminal domain"/>
    <property type="match status" value="1"/>
</dbReference>
<dbReference type="HAMAP" id="MF_00318">
    <property type="entry name" value="Enolase"/>
    <property type="match status" value="1"/>
</dbReference>
<dbReference type="InterPro" id="IPR000941">
    <property type="entry name" value="Enolase"/>
</dbReference>
<dbReference type="InterPro" id="IPR036849">
    <property type="entry name" value="Enolase-like_C_sf"/>
</dbReference>
<dbReference type="InterPro" id="IPR029017">
    <property type="entry name" value="Enolase-like_N"/>
</dbReference>
<dbReference type="InterPro" id="IPR020810">
    <property type="entry name" value="Enolase_C"/>
</dbReference>
<dbReference type="InterPro" id="IPR020809">
    <property type="entry name" value="Enolase_CS"/>
</dbReference>
<dbReference type="InterPro" id="IPR020811">
    <property type="entry name" value="Enolase_N"/>
</dbReference>
<dbReference type="NCBIfam" id="TIGR01060">
    <property type="entry name" value="eno"/>
    <property type="match status" value="1"/>
</dbReference>
<dbReference type="PANTHER" id="PTHR11902">
    <property type="entry name" value="ENOLASE"/>
    <property type="match status" value="1"/>
</dbReference>
<dbReference type="PANTHER" id="PTHR11902:SF1">
    <property type="entry name" value="ENOLASE"/>
    <property type="match status" value="1"/>
</dbReference>
<dbReference type="Pfam" id="PF00113">
    <property type="entry name" value="Enolase_C"/>
    <property type="match status" value="1"/>
</dbReference>
<dbReference type="Pfam" id="PF03952">
    <property type="entry name" value="Enolase_N"/>
    <property type="match status" value="1"/>
</dbReference>
<dbReference type="PIRSF" id="PIRSF001400">
    <property type="entry name" value="Enolase"/>
    <property type="match status" value="1"/>
</dbReference>
<dbReference type="PRINTS" id="PR00148">
    <property type="entry name" value="ENOLASE"/>
</dbReference>
<dbReference type="SFLD" id="SFLDS00001">
    <property type="entry name" value="Enolase"/>
    <property type="match status" value="1"/>
</dbReference>
<dbReference type="SFLD" id="SFLDF00002">
    <property type="entry name" value="enolase"/>
    <property type="match status" value="1"/>
</dbReference>
<dbReference type="SMART" id="SM01192">
    <property type="entry name" value="Enolase_C"/>
    <property type="match status" value="1"/>
</dbReference>
<dbReference type="SMART" id="SM01193">
    <property type="entry name" value="Enolase_N"/>
    <property type="match status" value="1"/>
</dbReference>
<dbReference type="SUPFAM" id="SSF51604">
    <property type="entry name" value="Enolase C-terminal domain-like"/>
    <property type="match status" value="1"/>
</dbReference>
<dbReference type="SUPFAM" id="SSF54826">
    <property type="entry name" value="Enolase N-terminal domain-like"/>
    <property type="match status" value="1"/>
</dbReference>
<dbReference type="PROSITE" id="PS00164">
    <property type="entry name" value="ENOLASE"/>
    <property type="match status" value="1"/>
</dbReference>
<comment type="function">
    <text evidence="1">Catalyzes the reversible conversion of 2-phosphoglycerate (2-PG) into phosphoenolpyruvate (PEP). It is essential for the degradation of carbohydrates via glycolysis.</text>
</comment>
<comment type="catalytic activity">
    <reaction evidence="1">
        <text>(2R)-2-phosphoglycerate = phosphoenolpyruvate + H2O</text>
        <dbReference type="Rhea" id="RHEA:10164"/>
        <dbReference type="ChEBI" id="CHEBI:15377"/>
        <dbReference type="ChEBI" id="CHEBI:58289"/>
        <dbReference type="ChEBI" id="CHEBI:58702"/>
        <dbReference type="EC" id="4.2.1.11"/>
    </reaction>
</comment>
<comment type="cofactor">
    <cofactor evidence="1">
        <name>Mg(2+)</name>
        <dbReference type="ChEBI" id="CHEBI:18420"/>
    </cofactor>
    <text evidence="1">Binds a second Mg(2+) ion via substrate during catalysis.</text>
</comment>
<comment type="pathway">
    <text evidence="1">Carbohydrate degradation; glycolysis; pyruvate from D-glyceraldehyde 3-phosphate: step 4/5.</text>
</comment>
<comment type="subcellular location">
    <subcellularLocation>
        <location evidence="1">Cytoplasm</location>
    </subcellularLocation>
    <subcellularLocation>
        <location evidence="1">Secreted</location>
    </subcellularLocation>
    <subcellularLocation>
        <location evidence="1">Cell surface</location>
    </subcellularLocation>
    <text evidence="1">Fractions of enolase are present in both the cytoplasm and on the cell surface.</text>
</comment>
<comment type="similarity">
    <text evidence="1">Belongs to the enolase family.</text>
</comment>
<protein>
    <recommendedName>
        <fullName evidence="1">Enolase</fullName>
        <ecNumber evidence="1">4.2.1.11</ecNumber>
    </recommendedName>
    <alternativeName>
        <fullName evidence="1">2-phospho-D-glycerate hydro-lyase</fullName>
    </alternativeName>
    <alternativeName>
        <fullName evidence="1">2-phosphoglycerate dehydratase</fullName>
    </alternativeName>
</protein>